<organism>
    <name type="scientific">Yersinia pseudotuberculosis serotype O:3 (strain YPIII)</name>
    <dbReference type="NCBI Taxonomy" id="502800"/>
    <lineage>
        <taxon>Bacteria</taxon>
        <taxon>Pseudomonadati</taxon>
        <taxon>Pseudomonadota</taxon>
        <taxon>Gammaproteobacteria</taxon>
        <taxon>Enterobacterales</taxon>
        <taxon>Yersiniaceae</taxon>
        <taxon>Yersinia</taxon>
    </lineage>
</organism>
<sequence length="98" mass="11186">MALTKAEMSEHLFEKLGLSKRDAKDLVELFFEEVRRALENGEQVKLSGFGNFDLRDKNQRPGRNPKTGEDIPITARRVVTFRPGQKLKSRVESATPKE</sequence>
<keyword id="KW-0233">DNA recombination</keyword>
<keyword id="KW-0238">DNA-binding</keyword>
<keyword id="KW-0804">Transcription</keyword>
<keyword id="KW-0805">Transcription regulation</keyword>
<keyword id="KW-0810">Translation regulation</keyword>
<accession>B1JJ23</accession>
<reference key="1">
    <citation type="submission" date="2008-02" db="EMBL/GenBank/DDBJ databases">
        <title>Complete sequence of Yersinia pseudotuberculosis YPIII.</title>
        <authorList>
            <consortium name="US DOE Joint Genome Institute"/>
            <person name="Copeland A."/>
            <person name="Lucas S."/>
            <person name="Lapidus A."/>
            <person name="Glavina del Rio T."/>
            <person name="Dalin E."/>
            <person name="Tice H."/>
            <person name="Bruce D."/>
            <person name="Goodwin L."/>
            <person name="Pitluck S."/>
            <person name="Munk A.C."/>
            <person name="Brettin T."/>
            <person name="Detter J.C."/>
            <person name="Han C."/>
            <person name="Tapia R."/>
            <person name="Schmutz J."/>
            <person name="Larimer F."/>
            <person name="Land M."/>
            <person name="Hauser L."/>
            <person name="Challacombe J.F."/>
            <person name="Green L."/>
            <person name="Lindler L.E."/>
            <person name="Nikolich M.P."/>
            <person name="Richardson P."/>
        </authorList>
    </citation>
    <scope>NUCLEOTIDE SEQUENCE [LARGE SCALE GENOMIC DNA]</scope>
    <source>
        <strain>YPIII</strain>
    </source>
</reference>
<protein>
    <recommendedName>
        <fullName evidence="1">Integration host factor subunit alpha</fullName>
        <shortName evidence="1">IHF-alpha</shortName>
    </recommendedName>
</protein>
<name>IHFA_YERPY</name>
<dbReference type="EMBL" id="CP000950">
    <property type="protein sequence ID" value="ACA68117.1"/>
    <property type="molecule type" value="Genomic_DNA"/>
</dbReference>
<dbReference type="RefSeq" id="WP_002211830.1">
    <property type="nucleotide sequence ID" value="NZ_CP009792.1"/>
</dbReference>
<dbReference type="SMR" id="B1JJ23"/>
<dbReference type="GeneID" id="97456078"/>
<dbReference type="KEGG" id="ypy:YPK_1826"/>
<dbReference type="PATRIC" id="fig|502800.11.peg.2495"/>
<dbReference type="GO" id="GO:0005829">
    <property type="term" value="C:cytosol"/>
    <property type="evidence" value="ECO:0007669"/>
    <property type="project" value="TreeGrafter"/>
</dbReference>
<dbReference type="GO" id="GO:0003677">
    <property type="term" value="F:DNA binding"/>
    <property type="evidence" value="ECO:0007669"/>
    <property type="project" value="UniProtKB-UniRule"/>
</dbReference>
<dbReference type="GO" id="GO:0030527">
    <property type="term" value="F:structural constituent of chromatin"/>
    <property type="evidence" value="ECO:0007669"/>
    <property type="project" value="InterPro"/>
</dbReference>
<dbReference type="GO" id="GO:0006310">
    <property type="term" value="P:DNA recombination"/>
    <property type="evidence" value="ECO:0007669"/>
    <property type="project" value="UniProtKB-UniRule"/>
</dbReference>
<dbReference type="GO" id="GO:0009893">
    <property type="term" value="P:positive regulation of metabolic process"/>
    <property type="evidence" value="ECO:0007669"/>
    <property type="project" value="UniProtKB-ARBA"/>
</dbReference>
<dbReference type="GO" id="GO:0006355">
    <property type="term" value="P:regulation of DNA-templated transcription"/>
    <property type="evidence" value="ECO:0007669"/>
    <property type="project" value="UniProtKB-UniRule"/>
</dbReference>
<dbReference type="GO" id="GO:0006417">
    <property type="term" value="P:regulation of translation"/>
    <property type="evidence" value="ECO:0007669"/>
    <property type="project" value="UniProtKB-UniRule"/>
</dbReference>
<dbReference type="CDD" id="cd13835">
    <property type="entry name" value="IHF_A"/>
    <property type="match status" value="1"/>
</dbReference>
<dbReference type="FunFam" id="4.10.520.10:FF:000002">
    <property type="entry name" value="Integration host factor subunit alpha"/>
    <property type="match status" value="1"/>
</dbReference>
<dbReference type="Gene3D" id="4.10.520.10">
    <property type="entry name" value="IHF-like DNA-binding proteins"/>
    <property type="match status" value="1"/>
</dbReference>
<dbReference type="HAMAP" id="MF_00380">
    <property type="entry name" value="IHF_alpha"/>
    <property type="match status" value="1"/>
</dbReference>
<dbReference type="InterPro" id="IPR000119">
    <property type="entry name" value="Hist_DNA-bd"/>
</dbReference>
<dbReference type="InterPro" id="IPR020816">
    <property type="entry name" value="Histone-like_DNA-bd_CS"/>
</dbReference>
<dbReference type="InterPro" id="IPR010992">
    <property type="entry name" value="IHF-like_DNA-bd_dom_sf"/>
</dbReference>
<dbReference type="InterPro" id="IPR005684">
    <property type="entry name" value="IHF_alpha"/>
</dbReference>
<dbReference type="NCBIfam" id="TIGR00987">
    <property type="entry name" value="himA"/>
    <property type="match status" value="1"/>
</dbReference>
<dbReference type="NCBIfam" id="NF001401">
    <property type="entry name" value="PRK00285.1"/>
    <property type="match status" value="1"/>
</dbReference>
<dbReference type="PANTHER" id="PTHR33175">
    <property type="entry name" value="DNA-BINDING PROTEIN HU"/>
    <property type="match status" value="1"/>
</dbReference>
<dbReference type="PANTHER" id="PTHR33175:SF2">
    <property type="entry name" value="INTEGRATION HOST FACTOR SUBUNIT ALPHA"/>
    <property type="match status" value="1"/>
</dbReference>
<dbReference type="Pfam" id="PF00216">
    <property type="entry name" value="Bac_DNA_binding"/>
    <property type="match status" value="1"/>
</dbReference>
<dbReference type="PRINTS" id="PR01727">
    <property type="entry name" value="DNABINDINGHU"/>
</dbReference>
<dbReference type="SMART" id="SM00411">
    <property type="entry name" value="BHL"/>
    <property type="match status" value="1"/>
</dbReference>
<dbReference type="SUPFAM" id="SSF47729">
    <property type="entry name" value="IHF-like DNA-binding proteins"/>
    <property type="match status" value="1"/>
</dbReference>
<dbReference type="PROSITE" id="PS00045">
    <property type="entry name" value="HISTONE_LIKE"/>
    <property type="match status" value="1"/>
</dbReference>
<evidence type="ECO:0000255" key="1">
    <source>
        <dbReference type="HAMAP-Rule" id="MF_00380"/>
    </source>
</evidence>
<evidence type="ECO:0000256" key="2">
    <source>
        <dbReference type="SAM" id="MobiDB-lite"/>
    </source>
</evidence>
<comment type="function">
    <text evidence="1">This protein is one of the two subunits of integration host factor, a specific DNA-binding protein that functions in genetic recombination as well as in transcriptional and translational control.</text>
</comment>
<comment type="subunit">
    <text evidence="1">Heterodimer of an alpha and a beta chain.</text>
</comment>
<comment type="similarity">
    <text evidence="1">Belongs to the bacterial histone-like protein family.</text>
</comment>
<proteinExistence type="inferred from homology"/>
<gene>
    <name evidence="1" type="primary">ihfA</name>
    <name evidence="1" type="synonym">himA</name>
    <name type="ordered locus">YPK_1826</name>
</gene>
<feature type="chain" id="PRO_1000122179" description="Integration host factor subunit alpha">
    <location>
        <begin position="1"/>
        <end position="98"/>
    </location>
</feature>
<feature type="region of interest" description="Disordered" evidence="2">
    <location>
        <begin position="49"/>
        <end position="70"/>
    </location>
</feature>